<comment type="function">
    <text evidence="1">Binds 23S rRNA and is also seen to make contacts with the A and possibly P site tRNAs.</text>
</comment>
<comment type="subunit">
    <text evidence="1">Part of the 50S ribosomal subunit.</text>
</comment>
<comment type="similarity">
    <text evidence="1">Belongs to the universal ribosomal protein uL16 family.</text>
</comment>
<keyword id="KW-1185">Reference proteome</keyword>
<keyword id="KW-0687">Ribonucleoprotein</keyword>
<keyword id="KW-0689">Ribosomal protein</keyword>
<keyword id="KW-0694">RNA-binding</keyword>
<keyword id="KW-0699">rRNA-binding</keyword>
<keyword id="KW-0820">tRNA-binding</keyword>
<accession>Q4FUE9</accession>
<name>RL16_PSYA2</name>
<organism>
    <name type="scientific">Psychrobacter arcticus (strain DSM 17307 / VKM B-2377 / 273-4)</name>
    <dbReference type="NCBI Taxonomy" id="259536"/>
    <lineage>
        <taxon>Bacteria</taxon>
        <taxon>Pseudomonadati</taxon>
        <taxon>Pseudomonadota</taxon>
        <taxon>Gammaproteobacteria</taxon>
        <taxon>Moraxellales</taxon>
        <taxon>Moraxellaceae</taxon>
        <taxon>Psychrobacter</taxon>
    </lineage>
</organism>
<evidence type="ECO:0000255" key="1">
    <source>
        <dbReference type="HAMAP-Rule" id="MF_01342"/>
    </source>
</evidence>
<evidence type="ECO:0000305" key="2"/>
<feature type="chain" id="PRO_0000062179" description="Large ribosomal subunit protein uL16">
    <location>
        <begin position="1"/>
        <end position="137"/>
    </location>
</feature>
<dbReference type="EMBL" id="CP000082">
    <property type="protein sequence ID" value="AAZ18359.1"/>
    <property type="molecule type" value="Genomic_DNA"/>
</dbReference>
<dbReference type="RefSeq" id="WP_011279793.1">
    <property type="nucleotide sequence ID" value="NC_007204.1"/>
</dbReference>
<dbReference type="SMR" id="Q4FUE9"/>
<dbReference type="STRING" id="259536.Psyc_0496"/>
<dbReference type="KEGG" id="par:Psyc_0496"/>
<dbReference type="eggNOG" id="COG0197">
    <property type="taxonomic scope" value="Bacteria"/>
</dbReference>
<dbReference type="HOGENOM" id="CLU_078858_2_1_6"/>
<dbReference type="OrthoDB" id="9802589at2"/>
<dbReference type="Proteomes" id="UP000000546">
    <property type="component" value="Chromosome"/>
</dbReference>
<dbReference type="GO" id="GO:0022625">
    <property type="term" value="C:cytosolic large ribosomal subunit"/>
    <property type="evidence" value="ECO:0007669"/>
    <property type="project" value="TreeGrafter"/>
</dbReference>
<dbReference type="GO" id="GO:0019843">
    <property type="term" value="F:rRNA binding"/>
    <property type="evidence" value="ECO:0007669"/>
    <property type="project" value="UniProtKB-UniRule"/>
</dbReference>
<dbReference type="GO" id="GO:0003735">
    <property type="term" value="F:structural constituent of ribosome"/>
    <property type="evidence" value="ECO:0007669"/>
    <property type="project" value="InterPro"/>
</dbReference>
<dbReference type="GO" id="GO:0000049">
    <property type="term" value="F:tRNA binding"/>
    <property type="evidence" value="ECO:0007669"/>
    <property type="project" value="UniProtKB-KW"/>
</dbReference>
<dbReference type="GO" id="GO:0006412">
    <property type="term" value="P:translation"/>
    <property type="evidence" value="ECO:0007669"/>
    <property type="project" value="UniProtKB-UniRule"/>
</dbReference>
<dbReference type="CDD" id="cd01433">
    <property type="entry name" value="Ribosomal_L16_L10e"/>
    <property type="match status" value="1"/>
</dbReference>
<dbReference type="FunFam" id="3.90.1170.10:FF:000001">
    <property type="entry name" value="50S ribosomal protein L16"/>
    <property type="match status" value="1"/>
</dbReference>
<dbReference type="Gene3D" id="3.90.1170.10">
    <property type="entry name" value="Ribosomal protein L10e/L16"/>
    <property type="match status" value="1"/>
</dbReference>
<dbReference type="HAMAP" id="MF_01342">
    <property type="entry name" value="Ribosomal_uL16"/>
    <property type="match status" value="1"/>
</dbReference>
<dbReference type="InterPro" id="IPR047873">
    <property type="entry name" value="Ribosomal_uL16"/>
</dbReference>
<dbReference type="InterPro" id="IPR000114">
    <property type="entry name" value="Ribosomal_uL16_bact-type"/>
</dbReference>
<dbReference type="InterPro" id="IPR020798">
    <property type="entry name" value="Ribosomal_uL16_CS"/>
</dbReference>
<dbReference type="InterPro" id="IPR016180">
    <property type="entry name" value="Ribosomal_uL16_dom"/>
</dbReference>
<dbReference type="InterPro" id="IPR036920">
    <property type="entry name" value="Ribosomal_uL16_sf"/>
</dbReference>
<dbReference type="NCBIfam" id="TIGR01164">
    <property type="entry name" value="rplP_bact"/>
    <property type="match status" value="1"/>
</dbReference>
<dbReference type="PANTHER" id="PTHR12220">
    <property type="entry name" value="50S/60S RIBOSOMAL PROTEIN L16"/>
    <property type="match status" value="1"/>
</dbReference>
<dbReference type="PANTHER" id="PTHR12220:SF13">
    <property type="entry name" value="LARGE RIBOSOMAL SUBUNIT PROTEIN UL16M"/>
    <property type="match status" value="1"/>
</dbReference>
<dbReference type="Pfam" id="PF00252">
    <property type="entry name" value="Ribosomal_L16"/>
    <property type="match status" value="1"/>
</dbReference>
<dbReference type="PRINTS" id="PR00060">
    <property type="entry name" value="RIBOSOMALL16"/>
</dbReference>
<dbReference type="SUPFAM" id="SSF54686">
    <property type="entry name" value="Ribosomal protein L16p/L10e"/>
    <property type="match status" value="1"/>
</dbReference>
<dbReference type="PROSITE" id="PS00586">
    <property type="entry name" value="RIBOSOMAL_L16_1"/>
    <property type="match status" value="1"/>
</dbReference>
<dbReference type="PROSITE" id="PS00701">
    <property type="entry name" value="RIBOSOMAL_L16_2"/>
    <property type="match status" value="1"/>
</dbReference>
<proteinExistence type="inferred from homology"/>
<protein>
    <recommendedName>
        <fullName evidence="1">Large ribosomal subunit protein uL16</fullName>
    </recommendedName>
    <alternativeName>
        <fullName evidence="2">50S ribosomal protein L16</fullName>
    </alternativeName>
</protein>
<sequence length="137" mass="15571">MLQPKRTKFRKMHKGRNTGLAHRGSTVAFGQIGLKSLTRGRMTARQIEAARRTITRKIKRGGKIWIRVFPDKPITNKPLEVRMGKGKGPVEYWVCEIKPGKILYELEGISEELAREALTLAASKLPFKTTIVKRTIM</sequence>
<reference key="1">
    <citation type="journal article" date="2010" name="Appl. Environ. Microbiol.">
        <title>The genome sequence of Psychrobacter arcticus 273-4, a psychroactive Siberian permafrost bacterium, reveals mechanisms for adaptation to low-temperature growth.</title>
        <authorList>
            <person name="Ayala-del-Rio H.L."/>
            <person name="Chain P.S."/>
            <person name="Grzymski J.J."/>
            <person name="Ponder M.A."/>
            <person name="Ivanova N."/>
            <person name="Bergholz P.W."/>
            <person name="Di Bartolo G."/>
            <person name="Hauser L."/>
            <person name="Land M."/>
            <person name="Bakermans C."/>
            <person name="Rodrigues D."/>
            <person name="Klappenbach J."/>
            <person name="Zarka D."/>
            <person name="Larimer F."/>
            <person name="Richardson P."/>
            <person name="Murray A."/>
            <person name="Thomashow M."/>
            <person name="Tiedje J.M."/>
        </authorList>
    </citation>
    <scope>NUCLEOTIDE SEQUENCE [LARGE SCALE GENOMIC DNA]</scope>
    <source>
        <strain>DSM 17307 / VKM B-2377 / 273-4</strain>
    </source>
</reference>
<gene>
    <name evidence="1" type="primary">rplP</name>
    <name type="ordered locus">Psyc_0496</name>
</gene>